<evidence type="ECO:0000250" key="1"/>
<evidence type="ECO:0000250" key="2">
    <source>
        <dbReference type="UniProtKB" id="Q91YE5"/>
    </source>
</evidence>
<evidence type="ECO:0000255" key="3"/>
<evidence type="ECO:0000255" key="4">
    <source>
        <dbReference type="PROSITE-ProRule" id="PRU00035"/>
    </source>
</evidence>
<evidence type="ECO:0000255" key="5">
    <source>
        <dbReference type="PROSITE-ProRule" id="PRU00063"/>
    </source>
</evidence>
<evidence type="ECO:0000255" key="6">
    <source>
        <dbReference type="PROSITE-ProRule" id="PRU00146"/>
    </source>
</evidence>
<evidence type="ECO:0000255" key="7">
    <source>
        <dbReference type="PROSITE-ProRule" id="PRU00338"/>
    </source>
</evidence>
<evidence type="ECO:0000256" key="8">
    <source>
        <dbReference type="SAM" id="MobiDB-lite"/>
    </source>
</evidence>
<evidence type="ECO:0000269" key="9">
    <source>
    </source>
</evidence>
<evidence type="ECO:0000269" key="10">
    <source>
    </source>
</evidence>
<evidence type="ECO:0000269" key="11">
    <source>
    </source>
</evidence>
<evidence type="ECO:0000303" key="12">
    <source>
    </source>
</evidence>
<evidence type="ECO:0000305" key="13"/>
<evidence type="ECO:0000305" key="14">
    <source>
    </source>
</evidence>
<evidence type="ECO:0007744" key="15">
    <source>
    </source>
</evidence>
<evidence type="ECO:0007744" key="16">
    <source>
    </source>
</evidence>
<evidence type="ECO:0007744" key="17">
    <source>
    </source>
</evidence>
<evidence type="ECO:0007744" key="18">
    <source>
    </source>
</evidence>
<evidence type="ECO:0007744" key="19">
    <source>
    </source>
</evidence>
<evidence type="ECO:0007744" key="20">
    <source>
    </source>
</evidence>
<evidence type="ECO:0007744" key="21">
    <source>
    </source>
</evidence>
<evidence type="ECO:0007744" key="22">
    <source>
    </source>
</evidence>
<evidence type="ECO:0007744" key="23">
    <source>
    </source>
</evidence>
<evidence type="ECO:0007829" key="24">
    <source>
        <dbReference type="PDB" id="4Q6F"/>
    </source>
</evidence>
<evidence type="ECO:0007829" key="25">
    <source>
        <dbReference type="PDB" id="4QF2"/>
    </source>
</evidence>
<evidence type="ECO:0007829" key="26">
    <source>
        <dbReference type="PDB" id="5AGQ"/>
    </source>
</evidence>
<evidence type="ECO:0007829" key="27">
    <source>
        <dbReference type="PDB" id="5MGJ"/>
    </source>
</evidence>
<evidence type="ECO:0007829" key="28">
    <source>
        <dbReference type="PDB" id="7MWI"/>
    </source>
</evidence>
<evidence type="ECO:0007829" key="29">
    <source>
        <dbReference type="PDB" id="7QYO"/>
    </source>
</evidence>
<accession>Q9UIF9</accession>
<accession>B3KN66</accession>
<accession>O00536</accession>
<accession>O15030</accession>
<accession>Q68DI8</accession>
<accession>Q96H26</accession>
<reference key="1">
    <citation type="journal article" date="2000" name="Genomics">
        <title>A novel family of bromodomain genes.</title>
        <authorList>
            <person name="Jones M.H."/>
            <person name="Hamana N."/>
            <person name="Nezu J."/>
            <person name="Shimane M."/>
        </authorList>
    </citation>
    <scope>NUCLEOTIDE SEQUENCE [MRNA] (ISOFORM 1)</scope>
    <source>
        <tissue>Testis</tissue>
    </source>
</reference>
<reference key="2">
    <citation type="journal article" date="2007" name="BMC Genomics">
        <title>The full-ORF clone resource of the German cDNA consortium.</title>
        <authorList>
            <person name="Bechtel S."/>
            <person name="Rosenfelder H."/>
            <person name="Duda A."/>
            <person name="Schmidt C.P."/>
            <person name="Ernst U."/>
            <person name="Wellenreuther R."/>
            <person name="Mehrle A."/>
            <person name="Schuster C."/>
            <person name="Bahr A."/>
            <person name="Bloecker H."/>
            <person name="Heubner D."/>
            <person name="Hoerlein A."/>
            <person name="Michel G."/>
            <person name="Wedler H."/>
            <person name="Koehrer K."/>
            <person name="Ottenwaelder B."/>
            <person name="Poustka A."/>
            <person name="Wiemann S."/>
            <person name="Schupp I."/>
        </authorList>
    </citation>
    <scope>NUCLEOTIDE SEQUENCE [LARGE SCALE MRNA] (ISOFORM 2)</scope>
    <source>
        <tissue>Fetal kidney</tissue>
    </source>
</reference>
<reference key="3">
    <citation type="journal article" date="2006" name="Nature">
        <title>The finished DNA sequence of human chromosome 12.</title>
        <authorList>
            <person name="Scherer S.E."/>
            <person name="Muzny D.M."/>
            <person name="Buhay C.J."/>
            <person name="Chen R."/>
            <person name="Cree A."/>
            <person name="Ding Y."/>
            <person name="Dugan-Rocha S."/>
            <person name="Gill R."/>
            <person name="Gunaratne P."/>
            <person name="Harris R.A."/>
            <person name="Hawes A.C."/>
            <person name="Hernandez J."/>
            <person name="Hodgson A.V."/>
            <person name="Hume J."/>
            <person name="Jackson A."/>
            <person name="Khan Z.M."/>
            <person name="Kovar-Smith C."/>
            <person name="Lewis L.R."/>
            <person name="Lozado R.J."/>
            <person name="Metzker M.L."/>
            <person name="Milosavljevic A."/>
            <person name="Miner G.R."/>
            <person name="Montgomery K.T."/>
            <person name="Morgan M.B."/>
            <person name="Nazareth L.V."/>
            <person name="Scott G."/>
            <person name="Sodergren E."/>
            <person name="Song X.-Z."/>
            <person name="Steffen D."/>
            <person name="Lovering R.C."/>
            <person name="Wheeler D.A."/>
            <person name="Worley K.C."/>
            <person name="Yuan Y."/>
            <person name="Zhang Z."/>
            <person name="Adams C.Q."/>
            <person name="Ansari-Lari M.A."/>
            <person name="Ayele M."/>
            <person name="Brown M.J."/>
            <person name="Chen G."/>
            <person name="Chen Z."/>
            <person name="Clerc-Blankenburg K.P."/>
            <person name="Davis C."/>
            <person name="Delgado O."/>
            <person name="Dinh H.H."/>
            <person name="Draper H."/>
            <person name="Gonzalez-Garay M.L."/>
            <person name="Havlak P."/>
            <person name="Jackson L.R."/>
            <person name="Jacob L.S."/>
            <person name="Kelly S.H."/>
            <person name="Li L."/>
            <person name="Li Z."/>
            <person name="Liu J."/>
            <person name="Liu W."/>
            <person name="Lu J."/>
            <person name="Maheshwari M."/>
            <person name="Nguyen B.-V."/>
            <person name="Okwuonu G.O."/>
            <person name="Pasternak S."/>
            <person name="Perez L.M."/>
            <person name="Plopper F.J.H."/>
            <person name="Santibanez J."/>
            <person name="Shen H."/>
            <person name="Tabor P.E."/>
            <person name="Verduzco D."/>
            <person name="Waldron L."/>
            <person name="Wang Q."/>
            <person name="Williams G.A."/>
            <person name="Zhang J."/>
            <person name="Zhou J."/>
            <person name="Allen C.C."/>
            <person name="Amin A.G."/>
            <person name="Anyalebechi V."/>
            <person name="Bailey M."/>
            <person name="Barbaria J.A."/>
            <person name="Bimage K.E."/>
            <person name="Bryant N.P."/>
            <person name="Burch P.E."/>
            <person name="Burkett C.E."/>
            <person name="Burrell K.L."/>
            <person name="Calderon E."/>
            <person name="Cardenas V."/>
            <person name="Carter K."/>
            <person name="Casias K."/>
            <person name="Cavazos I."/>
            <person name="Cavazos S.R."/>
            <person name="Ceasar H."/>
            <person name="Chacko J."/>
            <person name="Chan S.N."/>
            <person name="Chavez D."/>
            <person name="Christopoulos C."/>
            <person name="Chu J."/>
            <person name="Cockrell R."/>
            <person name="Cox C.D."/>
            <person name="Dang M."/>
            <person name="Dathorne S.R."/>
            <person name="David R."/>
            <person name="Davis C.M."/>
            <person name="Davy-Carroll L."/>
            <person name="Deshazo D.R."/>
            <person name="Donlin J.E."/>
            <person name="D'Souza L."/>
            <person name="Eaves K.A."/>
            <person name="Egan A."/>
            <person name="Emery-Cohen A.J."/>
            <person name="Escotto M."/>
            <person name="Flagg N."/>
            <person name="Forbes L.D."/>
            <person name="Gabisi A.M."/>
            <person name="Garza M."/>
            <person name="Hamilton C."/>
            <person name="Henderson N."/>
            <person name="Hernandez O."/>
            <person name="Hines S."/>
            <person name="Hogues M.E."/>
            <person name="Huang M."/>
            <person name="Idlebird D.G."/>
            <person name="Johnson R."/>
            <person name="Jolivet A."/>
            <person name="Jones S."/>
            <person name="Kagan R."/>
            <person name="King L.M."/>
            <person name="Leal B."/>
            <person name="Lebow H."/>
            <person name="Lee S."/>
            <person name="LeVan J.M."/>
            <person name="Lewis L.C."/>
            <person name="London P."/>
            <person name="Lorensuhewa L.M."/>
            <person name="Loulseged H."/>
            <person name="Lovett D.A."/>
            <person name="Lucier A."/>
            <person name="Lucier R.L."/>
            <person name="Ma J."/>
            <person name="Madu R.C."/>
            <person name="Mapua P."/>
            <person name="Martindale A.D."/>
            <person name="Martinez E."/>
            <person name="Massey E."/>
            <person name="Mawhiney S."/>
            <person name="Meador M.G."/>
            <person name="Mendez S."/>
            <person name="Mercado C."/>
            <person name="Mercado I.C."/>
            <person name="Merritt C.E."/>
            <person name="Miner Z.L."/>
            <person name="Minja E."/>
            <person name="Mitchell T."/>
            <person name="Mohabbat F."/>
            <person name="Mohabbat K."/>
            <person name="Montgomery B."/>
            <person name="Moore N."/>
            <person name="Morris S."/>
            <person name="Munidasa M."/>
            <person name="Ngo R.N."/>
            <person name="Nguyen N.B."/>
            <person name="Nickerson E."/>
            <person name="Nwaokelemeh O.O."/>
            <person name="Nwokenkwo S."/>
            <person name="Obregon M."/>
            <person name="Oguh M."/>
            <person name="Oragunye N."/>
            <person name="Oviedo R.J."/>
            <person name="Parish B.J."/>
            <person name="Parker D.N."/>
            <person name="Parrish J."/>
            <person name="Parks K.L."/>
            <person name="Paul H.A."/>
            <person name="Payton B.A."/>
            <person name="Perez A."/>
            <person name="Perrin W."/>
            <person name="Pickens A."/>
            <person name="Primus E.L."/>
            <person name="Pu L.-L."/>
            <person name="Puazo M."/>
            <person name="Quiles M.M."/>
            <person name="Quiroz J.B."/>
            <person name="Rabata D."/>
            <person name="Reeves K."/>
            <person name="Ruiz S.J."/>
            <person name="Shao H."/>
            <person name="Sisson I."/>
            <person name="Sonaike T."/>
            <person name="Sorelle R.P."/>
            <person name="Sutton A.E."/>
            <person name="Svatek A.F."/>
            <person name="Svetz L.A."/>
            <person name="Tamerisa K.S."/>
            <person name="Taylor T.R."/>
            <person name="Teague B."/>
            <person name="Thomas N."/>
            <person name="Thorn R.D."/>
            <person name="Trejos Z.Y."/>
            <person name="Trevino B.K."/>
            <person name="Ukegbu O.N."/>
            <person name="Urban J.B."/>
            <person name="Vasquez L.I."/>
            <person name="Vera V.A."/>
            <person name="Villasana D.M."/>
            <person name="Wang L."/>
            <person name="Ward-Moore S."/>
            <person name="Warren J.T."/>
            <person name="Wei X."/>
            <person name="White F."/>
            <person name="Williamson A.L."/>
            <person name="Wleczyk R."/>
            <person name="Wooden H.S."/>
            <person name="Wooden S.H."/>
            <person name="Yen J."/>
            <person name="Yoon L."/>
            <person name="Yoon V."/>
            <person name="Zorrilla S.E."/>
            <person name="Nelson D."/>
            <person name="Kucherlapati R."/>
            <person name="Weinstock G."/>
            <person name="Gibbs R.A."/>
        </authorList>
    </citation>
    <scope>NUCLEOTIDE SEQUENCE [LARGE SCALE GENOMIC DNA]</scope>
</reference>
<reference key="4">
    <citation type="journal article" date="1997" name="DNA Res.">
        <title>Prediction of the coding sequences of unidentified human genes. VII. The complete sequences of 100 new cDNA clones from brain which can code for large proteins in vitro.</title>
        <authorList>
            <person name="Nagase T."/>
            <person name="Ishikawa K."/>
            <person name="Nakajima D."/>
            <person name="Ohira M."/>
            <person name="Seki N."/>
            <person name="Miyajima N."/>
            <person name="Tanaka A."/>
            <person name="Kotani H."/>
            <person name="Nomura N."/>
            <person name="Ohara O."/>
        </authorList>
    </citation>
    <scope>NUCLEOTIDE SEQUENCE [LARGE SCALE MRNA] OF 7-1905 (ISOFORM 2)</scope>
    <source>
        <tissue>Brain</tissue>
    </source>
</reference>
<reference key="5">
    <citation type="submission" date="2005-08" db="EMBL/GenBank/DDBJ databases">
        <authorList>
            <person name="Ohara O."/>
            <person name="Nagase T."/>
            <person name="Kikuno R."/>
            <person name="Nomura N."/>
        </authorList>
    </citation>
    <scope>SEQUENCE REVISION</scope>
</reference>
<reference key="6">
    <citation type="journal article" date="2004" name="Nat. Genet.">
        <title>Complete sequencing and characterization of 21,243 full-length human cDNAs.</title>
        <authorList>
            <person name="Ota T."/>
            <person name="Suzuki Y."/>
            <person name="Nishikawa T."/>
            <person name="Otsuki T."/>
            <person name="Sugiyama T."/>
            <person name="Irie R."/>
            <person name="Wakamatsu A."/>
            <person name="Hayashi K."/>
            <person name="Sato H."/>
            <person name="Nagai K."/>
            <person name="Kimura K."/>
            <person name="Makita H."/>
            <person name="Sekine M."/>
            <person name="Obayashi M."/>
            <person name="Nishi T."/>
            <person name="Shibahara T."/>
            <person name="Tanaka T."/>
            <person name="Ishii S."/>
            <person name="Yamamoto J."/>
            <person name="Saito K."/>
            <person name="Kawai Y."/>
            <person name="Isono Y."/>
            <person name="Nakamura Y."/>
            <person name="Nagahari K."/>
            <person name="Murakami K."/>
            <person name="Yasuda T."/>
            <person name="Iwayanagi T."/>
            <person name="Wagatsuma M."/>
            <person name="Shiratori A."/>
            <person name="Sudo H."/>
            <person name="Hosoiri T."/>
            <person name="Kaku Y."/>
            <person name="Kodaira H."/>
            <person name="Kondo H."/>
            <person name="Sugawara M."/>
            <person name="Takahashi M."/>
            <person name="Kanda K."/>
            <person name="Yokoi T."/>
            <person name="Furuya T."/>
            <person name="Kikkawa E."/>
            <person name="Omura Y."/>
            <person name="Abe K."/>
            <person name="Kamihara K."/>
            <person name="Katsuta N."/>
            <person name="Sato K."/>
            <person name="Tanikawa M."/>
            <person name="Yamazaki M."/>
            <person name="Ninomiya K."/>
            <person name="Ishibashi T."/>
            <person name="Yamashita H."/>
            <person name="Murakawa K."/>
            <person name="Fujimori K."/>
            <person name="Tanai H."/>
            <person name="Kimata M."/>
            <person name="Watanabe M."/>
            <person name="Hiraoka S."/>
            <person name="Chiba Y."/>
            <person name="Ishida S."/>
            <person name="Ono Y."/>
            <person name="Takiguchi S."/>
            <person name="Watanabe S."/>
            <person name="Yosida M."/>
            <person name="Hotuta T."/>
            <person name="Kusano J."/>
            <person name="Kanehori K."/>
            <person name="Takahashi-Fujii A."/>
            <person name="Hara H."/>
            <person name="Tanase T.-O."/>
            <person name="Nomura Y."/>
            <person name="Togiya S."/>
            <person name="Komai F."/>
            <person name="Hara R."/>
            <person name="Takeuchi K."/>
            <person name="Arita M."/>
            <person name="Imose N."/>
            <person name="Musashino K."/>
            <person name="Yuuki H."/>
            <person name="Oshima A."/>
            <person name="Sasaki N."/>
            <person name="Aotsuka S."/>
            <person name="Yoshikawa Y."/>
            <person name="Matsunawa H."/>
            <person name="Ichihara T."/>
            <person name="Shiohata N."/>
            <person name="Sano S."/>
            <person name="Moriya S."/>
            <person name="Momiyama H."/>
            <person name="Satoh N."/>
            <person name="Takami S."/>
            <person name="Terashima Y."/>
            <person name="Suzuki O."/>
            <person name="Nakagawa S."/>
            <person name="Senoh A."/>
            <person name="Mizoguchi H."/>
            <person name="Goto Y."/>
            <person name="Shimizu F."/>
            <person name="Wakebe H."/>
            <person name="Hishigaki H."/>
            <person name="Watanabe T."/>
            <person name="Sugiyama A."/>
            <person name="Takemoto M."/>
            <person name="Kawakami B."/>
            <person name="Yamazaki M."/>
            <person name="Watanabe K."/>
            <person name="Kumagai A."/>
            <person name="Itakura S."/>
            <person name="Fukuzumi Y."/>
            <person name="Fujimori Y."/>
            <person name="Komiyama M."/>
            <person name="Tashiro H."/>
            <person name="Tanigami A."/>
            <person name="Fujiwara T."/>
            <person name="Ono T."/>
            <person name="Yamada K."/>
            <person name="Fujii Y."/>
            <person name="Ozaki K."/>
            <person name="Hirao M."/>
            <person name="Ohmori Y."/>
            <person name="Kawabata A."/>
            <person name="Hikiji T."/>
            <person name="Kobatake N."/>
            <person name="Inagaki H."/>
            <person name="Ikema Y."/>
            <person name="Okamoto S."/>
            <person name="Okitani R."/>
            <person name="Kawakami T."/>
            <person name="Noguchi S."/>
            <person name="Itoh T."/>
            <person name="Shigeta K."/>
            <person name="Senba T."/>
            <person name="Matsumura K."/>
            <person name="Nakajima Y."/>
            <person name="Mizuno T."/>
            <person name="Morinaga M."/>
            <person name="Sasaki M."/>
            <person name="Togashi T."/>
            <person name="Oyama M."/>
            <person name="Hata H."/>
            <person name="Watanabe M."/>
            <person name="Komatsu T."/>
            <person name="Mizushima-Sugano J."/>
            <person name="Satoh T."/>
            <person name="Shirai Y."/>
            <person name="Takahashi Y."/>
            <person name="Nakagawa K."/>
            <person name="Okumura K."/>
            <person name="Nagase T."/>
            <person name="Nomura N."/>
            <person name="Kikuchi H."/>
            <person name="Masuho Y."/>
            <person name="Yamashita R."/>
            <person name="Nakai K."/>
            <person name="Yada T."/>
            <person name="Nakamura Y."/>
            <person name="Ohara O."/>
            <person name="Isogai T."/>
            <person name="Sugano S."/>
        </authorList>
    </citation>
    <scope>NUCLEOTIDE SEQUENCE [LARGE SCALE MRNA] OF 58-1905 (ISOFORMS 1/2)</scope>
    <source>
        <tissue>Placenta</tissue>
    </source>
</reference>
<reference key="7">
    <citation type="submission" date="1997-04" db="EMBL/GenBank/DDBJ databases">
        <authorList>
            <person name="Jansa P."/>
            <person name="Grummt I."/>
        </authorList>
    </citation>
    <scope>NUCLEOTIDE SEQUENCE [MRNA] OF 359-753</scope>
    <source>
        <tissue>Lung</tissue>
    </source>
</reference>
<reference key="8">
    <citation type="journal article" date="2004" name="Genome Res.">
        <title>The status, quality, and expansion of the NIH full-length cDNA project: the Mammalian Gene Collection (MGC).</title>
        <authorList>
            <consortium name="The MGC Project Team"/>
        </authorList>
    </citation>
    <scope>NUCLEOTIDE SEQUENCE [LARGE SCALE MRNA] OF 1065-1905</scope>
    <source>
        <tissue>Lymph</tissue>
    </source>
</reference>
<reference key="9">
    <citation type="journal article" date="2006" name="Cell">
        <title>Global, in vivo, and site-specific phosphorylation dynamics in signaling networks.</title>
        <authorList>
            <person name="Olsen J.V."/>
            <person name="Blagoev B."/>
            <person name="Gnad F."/>
            <person name="Macek B."/>
            <person name="Kumar C."/>
            <person name="Mortensen P."/>
            <person name="Mann M."/>
        </authorList>
    </citation>
    <scope>IDENTIFICATION BY MASS SPECTROMETRY [LARGE SCALE ANALYSIS]</scope>
    <source>
        <tissue>Cervix carcinoma</tissue>
    </source>
</reference>
<reference key="10">
    <citation type="journal article" date="2007" name="Science">
        <title>ATM and ATR substrate analysis reveals extensive protein networks responsive to DNA damage.</title>
        <authorList>
            <person name="Matsuoka S."/>
            <person name="Ballif B.A."/>
            <person name="Smogorzewska A."/>
            <person name="McDonald E.R. III"/>
            <person name="Hurov K.E."/>
            <person name="Luo J."/>
            <person name="Bakalarski C.E."/>
            <person name="Zhao Z."/>
            <person name="Solimini N."/>
            <person name="Lerenthal Y."/>
            <person name="Shiloh Y."/>
            <person name="Gygi S.P."/>
            <person name="Elledge S.J."/>
        </authorList>
    </citation>
    <scope>PHOSPHORYLATION [LARGE SCALE ANALYSIS] AT SER-1559</scope>
    <scope>IDENTIFICATION BY MASS SPECTROMETRY [LARGE SCALE ANALYSIS]</scope>
    <source>
        <tissue>Embryonic kidney</tissue>
    </source>
</reference>
<reference key="11">
    <citation type="journal article" date="2008" name="Proc. Natl. Acad. Sci. U.S.A.">
        <title>A quantitative atlas of mitotic phosphorylation.</title>
        <authorList>
            <person name="Dephoure N."/>
            <person name="Zhou C."/>
            <person name="Villen J."/>
            <person name="Beausoleil S.A."/>
            <person name="Bakalarski C.E."/>
            <person name="Elledge S.J."/>
            <person name="Gygi S.P."/>
        </authorList>
    </citation>
    <scope>PHOSPHORYLATION [LARGE SCALE ANALYSIS] AT SER-1747; SER-1770 AND SER-1783</scope>
    <scope>IDENTIFICATION BY MASS SPECTROMETRY [LARGE SCALE ANALYSIS]</scope>
    <source>
        <tissue>Cervix carcinoma</tissue>
    </source>
</reference>
<reference key="12">
    <citation type="journal article" date="2009" name="Anal. Chem.">
        <title>Lys-N and trypsin cover complementary parts of the phosphoproteome in a refined SCX-based approach.</title>
        <authorList>
            <person name="Gauci S."/>
            <person name="Helbig A.O."/>
            <person name="Slijper M."/>
            <person name="Krijgsveld J."/>
            <person name="Heck A.J."/>
            <person name="Mohammed S."/>
        </authorList>
    </citation>
    <scope>IDENTIFICATION BY MASS SPECTROMETRY [LARGE SCALE ANALYSIS]</scope>
</reference>
<reference key="13">
    <citation type="journal article" date="2009" name="Nat. Cell Biol.">
        <title>Reversible acetylation of the chromatin remodelling complex NoRC is required for non-coding RNA-dependent silencing.</title>
        <authorList>
            <person name="Zhou Y."/>
            <person name="Schmitz K.M."/>
            <person name="Mayer C."/>
            <person name="Yuan X."/>
            <person name="Akhtar A."/>
            <person name="Grummt I."/>
        </authorList>
    </citation>
    <scope>PHOSPHORYLATION AT SER-1184</scope>
    <scope>ACETYLATION AT LYS-680</scope>
</reference>
<reference key="14">
    <citation type="journal article" date="2009" name="Sci. Signal.">
        <title>Quantitative phosphoproteomic analysis of T cell receptor signaling reveals system-wide modulation of protein-protein interactions.</title>
        <authorList>
            <person name="Mayya V."/>
            <person name="Lundgren D.H."/>
            <person name="Hwang S.-I."/>
            <person name="Rezaul K."/>
            <person name="Wu L."/>
            <person name="Eng J.K."/>
            <person name="Rodionov V."/>
            <person name="Han D.K."/>
        </authorList>
    </citation>
    <scope>PHOSPHORYLATION [LARGE SCALE ANALYSIS] AT SER-1397 AND SER-1783</scope>
    <scope>IDENTIFICATION BY MASS SPECTROMETRY [LARGE SCALE ANALYSIS]</scope>
    <source>
        <tissue>Leukemic T-cell</tissue>
    </source>
</reference>
<reference key="15">
    <citation type="journal article" date="2010" name="Sci. Signal.">
        <title>Quantitative phosphoproteomics reveals widespread full phosphorylation site occupancy during mitosis.</title>
        <authorList>
            <person name="Olsen J.V."/>
            <person name="Vermeulen M."/>
            <person name="Santamaria A."/>
            <person name="Kumar C."/>
            <person name="Miller M.L."/>
            <person name="Jensen L.J."/>
            <person name="Gnad F."/>
            <person name="Cox J."/>
            <person name="Jensen T.S."/>
            <person name="Nigg E.A."/>
            <person name="Brunak S."/>
            <person name="Mann M."/>
        </authorList>
    </citation>
    <scope>PHOSPHORYLATION [LARGE SCALE ANALYSIS] AT SER-509; SER-1397; SER-1770 AND SER-1783</scope>
    <scope>IDENTIFICATION BY MASS SPECTROMETRY [LARGE SCALE ANALYSIS]</scope>
    <source>
        <tissue>Cervix carcinoma</tissue>
    </source>
</reference>
<reference key="16">
    <citation type="journal article" date="2011" name="Sci. Signal.">
        <title>System-wide temporal characterization of the proteome and phosphoproteome of human embryonic stem cell differentiation.</title>
        <authorList>
            <person name="Rigbolt K.T."/>
            <person name="Prokhorova T.A."/>
            <person name="Akimov V."/>
            <person name="Henningsen J."/>
            <person name="Johansen P.T."/>
            <person name="Kratchmarova I."/>
            <person name="Kassem M."/>
            <person name="Mann M."/>
            <person name="Olsen J.V."/>
            <person name="Blagoev B."/>
        </authorList>
    </citation>
    <scope>PHOSPHORYLATION [LARGE SCALE ANALYSIS] AT SER-509; SER-1397; SER-1783 AND SER-1785</scope>
    <scope>IDENTIFICATION BY MASS SPECTROMETRY [LARGE SCALE ANALYSIS]</scope>
</reference>
<reference key="17">
    <citation type="journal article" date="2013" name="J. Proteome Res.">
        <title>Toward a comprehensive characterization of a human cancer cell phosphoproteome.</title>
        <authorList>
            <person name="Zhou H."/>
            <person name="Di Palma S."/>
            <person name="Preisinger C."/>
            <person name="Peng M."/>
            <person name="Polat A.N."/>
            <person name="Heck A.J."/>
            <person name="Mohammed S."/>
        </authorList>
    </citation>
    <scope>PHOSPHORYLATION [LARGE SCALE ANALYSIS] AT SER-509; THR-548; SER-613; SER-1051; SER-1397 AND SER-1783</scope>
    <scope>ACETYLATION AT LYS-799</scope>
    <scope>IDENTIFICATION BY MASS SPECTROMETRY [LARGE SCALE ANALYSIS]</scope>
    <source>
        <tissue>Cervix carcinoma</tissue>
        <tissue>Erythroleukemia</tissue>
    </source>
</reference>
<reference key="18">
    <citation type="journal article" date="2014" name="J. Proteomics">
        <title>An enzyme assisted RP-RPLC approach for in-depth analysis of human liver phosphoproteome.</title>
        <authorList>
            <person name="Bian Y."/>
            <person name="Song C."/>
            <person name="Cheng K."/>
            <person name="Dong M."/>
            <person name="Wang F."/>
            <person name="Huang J."/>
            <person name="Sun D."/>
            <person name="Wang L."/>
            <person name="Ye M."/>
            <person name="Zou H."/>
        </authorList>
    </citation>
    <scope>PHOSPHORYLATION [LARGE SCALE ANALYSIS] AT THR-507</scope>
    <scope>IDENTIFICATION BY MASS SPECTROMETRY [LARGE SCALE ANALYSIS]</scope>
    <source>
        <tissue>Liver</tissue>
    </source>
</reference>
<reference key="19">
    <citation type="journal article" date="2015" name="Cell Rep.">
        <title>SUMO-2 orchestrates chromatin modifiers in response to DNA damage.</title>
        <authorList>
            <person name="Hendriks I.A."/>
            <person name="Treffers L.W."/>
            <person name="Verlaan-de Vries M."/>
            <person name="Olsen J.V."/>
            <person name="Vertegaal A.C."/>
        </authorList>
    </citation>
    <scope>SUMOYLATION [LARGE SCALE ANALYSIS] AT LYS-1150</scope>
    <scope>IDENTIFICATION BY MASS SPECTROMETRY [LARGE SCALE ANALYSIS]</scope>
</reference>
<reference key="20">
    <citation type="journal article" date="2015" name="Genes Dev.">
        <title>Screen identifies bromodomain protein ZMYND8 in chromatin recognition of transcription-associated DNA damage that promotes homologous recombination.</title>
        <authorList>
            <person name="Gong F."/>
            <person name="Chiu L.Y."/>
            <person name="Cox B."/>
            <person name="Aymard F."/>
            <person name="Clouaire T."/>
            <person name="Leung J.W."/>
            <person name="Cammarata M."/>
            <person name="Perez M."/>
            <person name="Agarwal P."/>
            <person name="Brodbelt J.S."/>
            <person name="Legube G."/>
            <person name="Miller K.M."/>
        </authorList>
    </citation>
    <scope>SUBCELLULAR LOCATION</scope>
</reference>
<reference key="21">
    <citation type="journal article" date="2015" name="Proc. Natl. Acad. Sci. U.S.A.">
        <title>BEND3 represses rDNA transcription by stabilizing a NoRC component via USP21 deubiquitinase.</title>
        <authorList>
            <person name="Khan A."/>
            <person name="Giri S."/>
            <person name="Wang Y."/>
            <person name="Chakraborty A."/>
            <person name="Ghosh A.K."/>
            <person name="Anantharaman A."/>
            <person name="Aggarwal V."/>
            <person name="Sathyan K.M."/>
            <person name="Ha T."/>
            <person name="Prasanth K.V."/>
            <person name="Prasanth S.G."/>
        </authorList>
    </citation>
    <scope>INTERACTION WITH BEND3 AND USP21</scope>
    <scope>UBIQUITINATION</scope>
    <scope>DEUBIQUITINATION</scope>
</reference>
<reference key="22">
    <citation type="journal article" date="2017" name="EMBO Rep.">
        <title>Expansion of the ISWI chromatin remodeler family with new active complexes.</title>
        <authorList>
            <person name="Oppikofer M."/>
            <person name="Bai T."/>
            <person name="Gan Y."/>
            <person name="Haley B."/>
            <person name="Liu P."/>
            <person name="Sandoval W."/>
            <person name="Ciferri C."/>
            <person name="Cochran A.G."/>
        </authorList>
    </citation>
    <scope>FUNCTION</scope>
    <scope>IDENTIFICATION IN THE NORC-1 ISWI CHROMATIN REMODELING COMPLEX</scope>
    <scope>IDENTIFICATION IN THE NORC-5 CHROMATIN REMODELING COMPLEX</scope>
    <scope>INTERACTION WITH SMARCA1 AND SMARCA5</scope>
</reference>
<reference key="23">
    <citation type="journal article" date="2017" name="Nat. Struct. Mol. Biol.">
        <title>Site-specific mapping of the human SUMO proteome reveals co-modification with phosphorylation.</title>
        <authorList>
            <person name="Hendriks I.A."/>
            <person name="Lyon D."/>
            <person name="Young C."/>
            <person name="Jensen L.J."/>
            <person name="Vertegaal A.C."/>
            <person name="Nielsen M.L."/>
        </authorList>
    </citation>
    <scope>SUMOYLATION [LARGE SCALE ANALYSIS] AT LYS-866; LYS-1150; LYS-1172; LYS-1676 AND LYS-1709</scope>
    <scope>IDENTIFICATION BY MASS SPECTROMETRY [LARGE SCALE ANALYSIS]</scope>
</reference>
<keyword id="KW-0002">3D-structure</keyword>
<keyword id="KW-0007">Acetylation</keyword>
<keyword id="KW-0025">Alternative splicing</keyword>
<keyword id="KW-0103">Bromodomain</keyword>
<keyword id="KW-0156">Chromatin regulator</keyword>
<keyword id="KW-0175">Coiled coil</keyword>
<keyword id="KW-0238">DNA-binding</keyword>
<keyword id="KW-1017">Isopeptide bond</keyword>
<keyword id="KW-0479">Metal-binding</keyword>
<keyword id="KW-0539">Nucleus</keyword>
<keyword id="KW-0597">Phosphoprotein</keyword>
<keyword id="KW-1267">Proteomics identification</keyword>
<keyword id="KW-1185">Reference proteome</keyword>
<keyword id="KW-0677">Repeat</keyword>
<keyword id="KW-0678">Repressor</keyword>
<keyword id="KW-0694">RNA-binding</keyword>
<keyword id="KW-0804">Transcription</keyword>
<keyword id="KW-0805">Transcription regulation</keyword>
<keyword id="KW-0832">Ubl conjugation</keyword>
<keyword id="KW-0862">Zinc</keyword>
<keyword id="KW-0863">Zinc-finger</keyword>
<comment type="function">
    <text evidence="2 11">Regulatory subunit of the ATP-dependent NoRC-1 and NoRC-5 ISWI chromatin remodeling complexes, which form ordered nucleosome arrays on chromatin and facilitate access to DNA during DNA-templated processes such as DNA replication, transcription, and repair (PubMed:28801535). Both complexes regulate the spacing of nucleosomes along the chromatin and have the ability to slide mononucleosomes to the center of a DNA template (PubMed:28801535). Directly stimulates the ATPase activity of SMARCA5 in the NoRC-5 ISWI chromatin remodeling complex (PubMed:28801535). The NoRC-1 ISWI chromatin remodeling complex has a lower ATP hydrolysis rate than the NoRC-5 ISWI chromatin remodeling complex (PubMed:28801535). Within the NoRC-5 ISWI chromatin remodeling complex, mediates silencing of a fraction of rDNA by recruiting histone-modifying enzymes and DNA methyltransferases, leading to heterochromatin formation and transcriptional silencing (By similarity). In the complex, it plays a central role by being recruited to rDNA and by targeting chromatin modifying enzymes such as HDAC1, leading to repress RNA polymerase I transcription (By similarity). Recruited to rDNA via its interaction with TTF1 and its ability to recognize and bind histone H4 acetylated on 'Lys-16' (H4K16ac), leading to deacetylation of H4K5ac, H4K8ac, H4K12ac but not H4K16ac (By similarity). Specifically binds pRNAs, 150-250 nucleotide RNAs that are complementary in sequence to the rDNA promoter; pRNA-binding is required for heterochromatin formation and rDNA silencing (By similarity).</text>
</comment>
<comment type="subunit">
    <text evidence="2 10 11">Component of the NoRC-1 ISWI chromatin remodeling complex at least composed of SMARCA1 and BAZ2A/TIP5, which regulates the spacing of histone octamers on the DNA template to facilitate access to DNA (PubMed:28801535). Within the NoRC-1 ISWI chromatin remodeling complex interacts with SMARCA1; the interaction is direct (PubMed:28801535). Component of the NoRC-5 ISWI chromatin remodeling complex (also called the NoRC nucleolar-remodeling complex), at least composed of SMARCA5/SNF2H and BAZ2A/TIP5, which regulates the spacing of histone octamers on the DNA template to facilitate access to DNA (PubMed:28801535). Within the NoRC-5 ISWI chromatin remodeling complexes interacts with SMARCA5/SNF2H; the interaction is direct (PubMed:28801535). Interacts with TTF1; the interaction is required for recruitment of the NoRC-5 ISWI chromatin remodeling complex to rDNA (By similarity). Interacts with HDAC1 (By similarity). Interacts with SIN3A (By similarity). Interacts with DNMT1 and DNM3B (By similarity). Interacts with BEND3 and USP21 (PubMed:26100909).</text>
</comment>
<comment type="interaction">
    <interactant intactId="EBI-934890">
        <id>Q9UIF9</id>
    </interactant>
    <interactant intactId="EBI-389883">
        <id>P16333</id>
        <label>NCK1</label>
    </interactant>
    <organismsDiffer>false</organismsDiffer>
    <experiments>2</experiments>
</comment>
<comment type="interaction">
    <interactant intactId="EBI-934890">
        <id>Q9UIF9</id>
    </interactant>
    <interactant intactId="EBI-11705418">
        <id>Q62187</id>
        <label>Ttf1</label>
    </interactant>
    <organismsDiffer>true</organismsDiffer>
    <experiments>3</experiments>
</comment>
<comment type="subcellular location">
    <subcellularLocation>
        <location evidence="2 14">Nucleus</location>
        <location evidence="2 14">Nucleolus</location>
    </subcellularLocation>
    <text evidence="2">Colocalizes with the basal RNA polymerase I transcription factor UBF in the nucleolus.</text>
</comment>
<comment type="alternative products">
    <event type="alternative splicing"/>
    <isoform>
        <id>Q9UIF9-1</id>
        <name>2</name>
        <sequence type="displayed"/>
    </isoform>
    <isoform>
        <id>Q9UIF9-2</id>
        <name>1</name>
        <sequence type="described" ref="VSP_037960 VSP_019111"/>
    </isoform>
    <isoform>
        <id>Q9UIF9-3</id>
        <name>3</name>
        <sequence type="described" ref="VSP_037961"/>
    </isoform>
</comment>
<comment type="tissue specificity">
    <text>Expressed at moderate levels in most tissues analyzed, including heart, brain, placenta, lung, skeletal muscle, kidney and pancreas.</text>
</comment>
<comment type="domain">
    <text evidence="2">The bromo domain and the PHD-type zinc finger recognize and bind histone H4 acetylated on 'Lys-16' (H4K16ac). These 2 domains play a central role in the recruitment of chromatin silencing proteins such as DNMT1, DNMT3B and HDAC1.</text>
</comment>
<comment type="domain">
    <text evidence="2">The MBD (methyl-CpG-binding) domain, also named TAM domain, specifically recognizes and binds a conserved stem-loop structure the association within pRNA. Binding to pRNA induces a conformational change of BAZ2A/TIP5 and is essential for targeting the NoRC complex to the nucleolus.</text>
</comment>
<comment type="PTM">
    <text evidence="1">Acetylation at Lys-680 by KAT8/MOF promotes its dissociation from pRNA, affecting heterochromatin formation, nucleosome positioning and rDNA silencing. Deacetylation by SIRT1 in late S phase enhances pRNA-binding, allowing de novo DNA methylation and heterochromatin formation. Acetylation is high during S phase and declines to background levels in late S phase when the silent copies of rRNA genes are replicated (By similarity).</text>
</comment>
<comment type="PTM">
    <text evidence="10">Ubiquitinated. Deubiquitinated by USP21 leading to its stabilization.</text>
</comment>
<comment type="similarity">
    <text evidence="13">Belongs to the WAL family.</text>
</comment>
<comment type="sequence caution" evidence="13">
    <conflict type="miscellaneous discrepancy">
        <sequence resource="EMBL-CDS" id="AAB60864"/>
    </conflict>
    <text>Contaminating sequence. Potential poly-A sequence.</text>
</comment>
<comment type="sequence caution" evidence="13">
    <conflict type="erroneous termination">
        <sequence resource="EMBL-CDS" id="BAG51228"/>
    </conflict>
    <text>Truncated C-terminus.</text>
</comment>
<feature type="chain" id="PRO_0000211172" description="Bromodomain adjacent to zinc finger domain protein 2A">
    <location>
        <begin position="1"/>
        <end position="1905"/>
    </location>
</feature>
<feature type="domain" description="MBD" evidence="7">
    <location>
        <begin position="546"/>
        <end position="617"/>
    </location>
</feature>
<feature type="domain" description="DDT" evidence="5">
    <location>
        <begin position="848"/>
        <end position="913"/>
    </location>
</feature>
<feature type="domain" description="Bromo" evidence="4">
    <location>
        <begin position="1793"/>
        <end position="1897"/>
    </location>
</feature>
<feature type="DNA-binding region" description="A.T hook 1">
    <location>
        <begin position="649"/>
        <end position="661"/>
    </location>
</feature>
<feature type="DNA-binding region" description="A.T hook 2">
    <location>
        <begin position="670"/>
        <end position="682"/>
    </location>
</feature>
<feature type="DNA-binding region" description="A.T hook 3">
    <location>
        <begin position="1186"/>
        <end position="1198"/>
    </location>
</feature>
<feature type="DNA-binding region" description="A.T hook 4">
    <location>
        <begin position="1404"/>
        <end position="1416"/>
    </location>
</feature>
<feature type="zinc finger region" description="PHD-type" evidence="6">
    <location>
        <begin position="1676"/>
        <end position="1726"/>
    </location>
</feature>
<feature type="region of interest" description="Disordered" evidence="8">
    <location>
        <begin position="1"/>
        <end position="59"/>
    </location>
</feature>
<feature type="region of interest" description="Disordered" evidence="8">
    <location>
        <begin position="362"/>
        <end position="434"/>
    </location>
</feature>
<feature type="region of interest" description="Disordered" evidence="8">
    <location>
        <begin position="648"/>
        <end position="792"/>
    </location>
</feature>
<feature type="region of interest" description="Disordered" evidence="8">
    <location>
        <begin position="1178"/>
        <end position="1220"/>
    </location>
</feature>
<feature type="region of interest" description="Disordered" evidence="8">
    <location>
        <begin position="1283"/>
        <end position="1318"/>
    </location>
</feature>
<feature type="region of interest" description="Disordered" evidence="8">
    <location>
        <begin position="1330"/>
        <end position="1412"/>
    </location>
</feature>
<feature type="region of interest" description="Disordered" evidence="8">
    <location>
        <begin position="1734"/>
        <end position="1755"/>
    </location>
</feature>
<feature type="region of interest" description="Disordered" evidence="8">
    <location>
        <begin position="1769"/>
        <end position="1789"/>
    </location>
</feature>
<feature type="coiled-coil region" evidence="3">
    <location>
        <begin position="693"/>
        <end position="792"/>
    </location>
</feature>
<feature type="compositionally biased region" description="Polar residues" evidence="8">
    <location>
        <begin position="35"/>
        <end position="59"/>
    </location>
</feature>
<feature type="compositionally biased region" description="Polar residues" evidence="8">
    <location>
        <begin position="379"/>
        <end position="391"/>
    </location>
</feature>
<feature type="compositionally biased region" description="Polar residues" evidence="8">
    <location>
        <begin position="399"/>
        <end position="420"/>
    </location>
</feature>
<feature type="compositionally biased region" description="Basic and acidic residues" evidence="8">
    <location>
        <begin position="656"/>
        <end position="668"/>
    </location>
</feature>
<feature type="compositionally biased region" description="Basic residues" evidence="8">
    <location>
        <begin position="669"/>
        <end position="678"/>
    </location>
</feature>
<feature type="compositionally biased region" description="Basic and acidic residues" evidence="8">
    <location>
        <begin position="686"/>
        <end position="709"/>
    </location>
</feature>
<feature type="compositionally biased region" description="Basic residues" evidence="8">
    <location>
        <begin position="710"/>
        <end position="721"/>
    </location>
</feature>
<feature type="compositionally biased region" description="Polar residues" evidence="8">
    <location>
        <begin position="725"/>
        <end position="734"/>
    </location>
</feature>
<feature type="compositionally biased region" description="Basic and acidic residues" evidence="8">
    <location>
        <begin position="739"/>
        <end position="748"/>
    </location>
</feature>
<feature type="compositionally biased region" description="Basic and acidic residues" evidence="8">
    <location>
        <begin position="756"/>
        <end position="792"/>
    </location>
</feature>
<feature type="compositionally biased region" description="Low complexity" evidence="8">
    <location>
        <begin position="1283"/>
        <end position="1293"/>
    </location>
</feature>
<feature type="compositionally biased region" description="Acidic residues" evidence="8">
    <location>
        <begin position="1306"/>
        <end position="1315"/>
    </location>
</feature>
<feature type="compositionally biased region" description="Polar residues" evidence="8">
    <location>
        <begin position="1345"/>
        <end position="1359"/>
    </location>
</feature>
<feature type="modified residue" description="Phosphothreonine" evidence="21">
    <location>
        <position position="507"/>
    </location>
</feature>
<feature type="modified residue" description="Phosphoserine" evidence="18 19 20">
    <location>
        <position position="509"/>
    </location>
</feature>
<feature type="modified residue" description="Phosphothreonine" evidence="20">
    <location>
        <position position="548"/>
    </location>
</feature>
<feature type="modified residue" description="Phosphoserine" evidence="20">
    <location>
        <position position="613"/>
    </location>
</feature>
<feature type="modified residue" description="N6-acetyllysine; by KAT8" evidence="9">
    <location>
        <position position="680"/>
    </location>
</feature>
<feature type="modified residue" description="N6-acetyllysine" evidence="2">
    <location>
        <position position="799"/>
    </location>
</feature>
<feature type="modified residue" description="Phosphoserine" evidence="2">
    <location>
        <position position="1051"/>
    </location>
</feature>
<feature type="modified residue" description="Phosphoserine" evidence="2">
    <location>
        <position position="1184"/>
    </location>
</feature>
<feature type="modified residue" description="Phosphoserine" evidence="17 18 19 20">
    <location>
        <position position="1397"/>
    </location>
</feature>
<feature type="modified residue" description="Phosphoserine" evidence="15">
    <location>
        <position position="1559"/>
    </location>
</feature>
<feature type="modified residue" description="Phosphoserine" evidence="16">
    <location>
        <position position="1747"/>
    </location>
</feature>
<feature type="modified residue" description="Phosphoserine" evidence="16 18">
    <location>
        <position position="1770"/>
    </location>
</feature>
<feature type="modified residue" description="Phosphoserine" evidence="16 17 18 19 20">
    <location>
        <position position="1783"/>
    </location>
</feature>
<feature type="modified residue" description="Phosphoserine" evidence="19">
    <location>
        <position position="1785"/>
    </location>
</feature>
<feature type="cross-link" description="Glycyl lysine isopeptide (Lys-Gly) (interchain with G-Cter in SUMO2)" evidence="23">
    <location>
        <position position="866"/>
    </location>
</feature>
<feature type="cross-link" description="Glycyl lysine isopeptide (Lys-Gly) (interchain with G-Cter in SUMO2)" evidence="22 23">
    <location>
        <position position="1150"/>
    </location>
</feature>
<feature type="cross-link" description="Glycyl lysine isopeptide (Lys-Gly) (interchain with G-Cter in SUMO2)" evidence="23">
    <location>
        <position position="1172"/>
    </location>
</feature>
<feature type="cross-link" description="Glycyl lysine isopeptide (Lys-Gly) (interchain with G-Cter in SUMO2)" evidence="23">
    <location>
        <position position="1676"/>
    </location>
</feature>
<feature type="cross-link" description="Glycyl lysine isopeptide (Lys-Gly) (interchain with G-Cter in SUMO2)" evidence="23">
    <location>
        <position position="1709"/>
    </location>
</feature>
<feature type="splice variant" id="VSP_037960" description="In isoform 1." evidence="12">
    <original>N</original>
    <variation>NEAN</variation>
    <location>
        <position position="6"/>
    </location>
</feature>
<feature type="splice variant" id="VSP_019111" description="In isoform 1." evidence="12">
    <location>
        <begin position="178"/>
        <end position="207"/>
    </location>
</feature>
<feature type="splice variant" id="VSP_037961" description="In isoform 3." evidence="13">
    <location>
        <begin position="1434"/>
        <end position="1437"/>
    </location>
</feature>
<feature type="sequence variant" id="VAR_055548" description="In dbSNP:rs2230579.">
    <original>V</original>
    <variation>E</variation>
    <location>
        <position position="498"/>
    </location>
</feature>
<feature type="sequence conflict" description="In Ref. 2; CAH18232." evidence="13" ref="2">
    <original>N</original>
    <variation>S</variation>
    <location>
        <position position="106"/>
    </location>
</feature>
<feature type="sequence conflict" description="In Ref. 1; BAA89211." evidence="13" ref="1">
    <original>E</original>
    <variation>K</variation>
    <location>
        <position position="148"/>
    </location>
</feature>
<feature type="sequence conflict" description="In Ref. 1; BAA89211." evidence="13" ref="1">
    <original>Q</original>
    <variation>H</variation>
    <location>
        <position position="155"/>
    </location>
</feature>
<feature type="sequence conflict" description="In Ref. 2; CAH18232." evidence="13" ref="2">
    <original>Q</original>
    <variation>P</variation>
    <location>
        <position position="207"/>
    </location>
</feature>
<feature type="sequence conflict" description="In Ref. 1; BAA89211." evidence="13" ref="1">
    <original>G</original>
    <variation>C</variation>
    <location>
        <position position="210"/>
    </location>
</feature>
<feature type="sequence conflict" description="In Ref. 1; BAA89211." evidence="13" ref="1">
    <original>G</original>
    <variation>C</variation>
    <location>
        <position position="236"/>
    </location>
</feature>
<feature type="sequence conflict" description="In Ref. 2; CAH18232." evidence="13" ref="2">
    <original>A</original>
    <variation>T</variation>
    <location>
        <position position="503"/>
    </location>
</feature>
<feature type="sequence conflict" description="In Ref. 1; BAA89211." evidence="13" ref="1">
    <original>V</original>
    <variation>L</variation>
    <location>
        <position position="601"/>
    </location>
</feature>
<feature type="sequence conflict" description="In Ref. 1; BAA89211." evidence="13" ref="1">
    <original>Q</original>
    <variation>L</variation>
    <location>
        <position position="727"/>
    </location>
</feature>
<feature type="sequence conflict" description="In Ref. 1; BAA89211." evidence="13" ref="1">
    <original>Q</original>
    <variation>H</variation>
    <location>
        <position position="747"/>
    </location>
</feature>
<feature type="sequence conflict" description="In Ref. 1; BAA89211." evidence="13" ref="1">
    <original>R</original>
    <variation>K</variation>
    <location>
        <position position="812"/>
    </location>
</feature>
<feature type="sequence conflict" description="In Ref. 1; BAA89211." evidence="13" ref="1">
    <original>L</original>
    <variation>P</variation>
    <location>
        <position position="978"/>
    </location>
</feature>
<feature type="sequence conflict" description="In Ref. 1; BAA89211." evidence="13" ref="1">
    <original>EG</original>
    <variation>GR</variation>
    <location>
        <begin position="1032"/>
        <end position="1033"/>
    </location>
</feature>
<feature type="sequence conflict" description="In Ref. 1; BAA89211." evidence="13" ref="1">
    <original>G</original>
    <variation>S</variation>
    <location>
        <position position="1190"/>
    </location>
</feature>
<feature type="sequence conflict" description="In Ref. 1; BAA89211." evidence="13" ref="1">
    <original>R</original>
    <variation>L</variation>
    <location>
        <position position="1193"/>
    </location>
</feature>
<feature type="sequence conflict" description="In Ref. 1; BAA89211." evidence="13" ref="1">
    <original>S</original>
    <variation>F</variation>
    <location>
        <position position="1199"/>
    </location>
</feature>
<feature type="sequence conflict" description="In Ref. 1; BAA89211." evidence="13" ref="1">
    <original>L</original>
    <variation>F</variation>
    <location>
        <position position="1205"/>
    </location>
</feature>
<feature type="sequence conflict" description="In Ref. 1; BAA89211." evidence="13" ref="1">
    <original>A</original>
    <variation>V</variation>
    <location>
        <position position="1229"/>
    </location>
</feature>
<feature type="sequence conflict" description="In Ref. 2; CAH18232." evidence="13" ref="2">
    <original>S</original>
    <variation>N</variation>
    <location>
        <position position="1274"/>
    </location>
</feature>
<feature type="sequence conflict" description="In Ref. 1; BAA89211." evidence="13" ref="1">
    <original>P</original>
    <variation>L</variation>
    <location>
        <position position="1319"/>
    </location>
</feature>
<feature type="sequence conflict" description="In Ref. 1; BAA89211." evidence="13" ref="1">
    <original>L</original>
    <variation>F</variation>
    <location>
        <position position="1322"/>
    </location>
</feature>
<feature type="sequence conflict" description="In Ref. 1; BAA89211." evidence="13" ref="1">
    <original>P</original>
    <variation>L</variation>
    <location>
        <position position="1340"/>
    </location>
</feature>
<feature type="sequence conflict" description="In Ref. 1; BAA89211." evidence="13" ref="1">
    <original>R</original>
    <variation>P</variation>
    <location>
        <position position="1443"/>
    </location>
</feature>
<feature type="sequence conflict" description="In Ref. 1; BAA89211." evidence="13" ref="1">
    <original>R</original>
    <variation>P</variation>
    <location>
        <position position="1568"/>
    </location>
</feature>
<feature type="sequence conflict" description="In Ref. 1; BAA89211." evidence="13" ref="1">
    <original>E</original>
    <variation>K</variation>
    <location>
        <position position="1598"/>
    </location>
</feature>
<feature type="sequence conflict" description="In Ref. 1; BAA89211." evidence="13" ref="1">
    <original>V</original>
    <variation>I</variation>
    <location>
        <position position="1643"/>
    </location>
</feature>
<feature type="sequence conflict" description="In Ref. 1; BAA89211." evidence="13" ref="1">
    <original>E</original>
    <variation>Q</variation>
    <location>
        <position position="1649"/>
    </location>
</feature>
<feature type="sequence conflict" description="In Ref. 1; BAA89211." evidence="13" ref="1">
    <original>Q</original>
    <variation>H</variation>
    <location>
        <position position="1656"/>
    </location>
</feature>
<feature type="sequence conflict" description="In Ref. 1; BAA89211." evidence="13" ref="1">
    <original>Q</original>
    <variation>H</variation>
    <location>
        <position position="1663"/>
    </location>
</feature>
<feature type="sequence conflict" description="In Ref. 1; BAA89211." evidence="13" ref="1">
    <original>R</original>
    <variation>K</variation>
    <location>
        <position position="1766"/>
    </location>
</feature>
<feature type="sequence conflict" description="In Ref. 1; BAA89211." evidence="13" ref="1">
    <original>G</original>
    <variation>R</variation>
    <location>
        <position position="1781"/>
    </location>
</feature>
<feature type="helix" evidence="28">
    <location>
        <begin position="549"/>
        <end position="553"/>
    </location>
</feature>
<feature type="helix" evidence="28">
    <location>
        <begin position="554"/>
        <end position="557"/>
    </location>
</feature>
<feature type="strand" evidence="28">
    <location>
        <begin position="561"/>
        <end position="568"/>
    </location>
</feature>
<feature type="strand" evidence="28">
    <location>
        <begin position="570"/>
        <end position="580"/>
    </location>
</feature>
<feature type="strand" evidence="26">
    <location>
        <begin position="582"/>
        <end position="584"/>
    </location>
</feature>
<feature type="helix" evidence="28">
    <location>
        <begin position="590"/>
        <end position="599"/>
    </location>
</feature>
<feature type="helix" evidence="28">
    <location>
        <begin position="607"/>
        <end position="609"/>
    </location>
</feature>
<feature type="strand" evidence="28">
    <location>
        <begin position="619"/>
        <end position="627"/>
    </location>
</feature>
<feature type="strand" evidence="28">
    <location>
        <begin position="630"/>
        <end position="635"/>
    </location>
</feature>
<feature type="turn" evidence="28">
    <location>
        <begin position="638"/>
        <end position="640"/>
    </location>
</feature>
<feature type="helix" evidence="28">
    <location>
        <begin position="641"/>
        <end position="647"/>
    </location>
</feature>
<feature type="helix" evidence="24">
    <location>
        <begin position="1674"/>
        <end position="1676"/>
    </location>
</feature>
<feature type="turn" evidence="25">
    <location>
        <begin position="1680"/>
        <end position="1682"/>
    </location>
</feature>
<feature type="helix" evidence="25">
    <location>
        <begin position="1688"/>
        <end position="1690"/>
    </location>
</feature>
<feature type="strand" evidence="25">
    <location>
        <begin position="1691"/>
        <end position="1693"/>
    </location>
</feature>
<feature type="strand" evidence="25">
    <location>
        <begin position="1695"/>
        <end position="1698"/>
    </location>
</feature>
<feature type="strand" evidence="25">
    <location>
        <begin position="1700"/>
        <end position="1702"/>
    </location>
</feature>
<feature type="turn" evidence="25">
    <location>
        <begin position="1703"/>
        <end position="1705"/>
    </location>
</feature>
<feature type="helix" evidence="25">
    <location>
        <begin position="1721"/>
        <end position="1724"/>
    </location>
</feature>
<feature type="helix" evidence="29">
    <location>
        <begin position="1797"/>
        <end position="1799"/>
    </location>
</feature>
<feature type="helix" evidence="29">
    <location>
        <begin position="1800"/>
        <end position="1811"/>
    </location>
</feature>
<feature type="helix" evidence="27">
    <location>
        <begin position="1813"/>
        <end position="1815"/>
    </location>
</feature>
<feature type="helix" evidence="29">
    <location>
        <begin position="1816"/>
        <end position="1818"/>
    </location>
</feature>
<feature type="turn" evidence="29">
    <location>
        <begin position="1824"/>
        <end position="1826"/>
    </location>
</feature>
<feature type="helix" evidence="29">
    <location>
        <begin position="1830"/>
        <end position="1833"/>
    </location>
</feature>
<feature type="helix" evidence="29">
    <location>
        <begin position="1840"/>
        <end position="1849"/>
    </location>
</feature>
<feature type="helix" evidence="29">
    <location>
        <begin position="1855"/>
        <end position="1872"/>
    </location>
</feature>
<feature type="helix" evidence="29">
    <location>
        <begin position="1878"/>
        <end position="1897"/>
    </location>
</feature>
<dbReference type="EMBL" id="AB032254">
    <property type="protein sequence ID" value="BAA89211.1"/>
    <property type="molecule type" value="mRNA"/>
</dbReference>
<dbReference type="EMBL" id="CR749379">
    <property type="protein sequence ID" value="CAH18232.1"/>
    <property type="molecule type" value="mRNA"/>
</dbReference>
<dbReference type="EMBL" id="AC090681">
    <property type="status" value="NOT_ANNOTATED_CDS"/>
    <property type="molecule type" value="Genomic_DNA"/>
</dbReference>
<dbReference type="EMBL" id="AB002312">
    <property type="protein sequence ID" value="BAA20773.2"/>
    <property type="molecule type" value="mRNA"/>
</dbReference>
<dbReference type="EMBL" id="AK023830">
    <property type="protein sequence ID" value="BAG51228.1"/>
    <property type="status" value="ALT_SEQ"/>
    <property type="molecule type" value="mRNA"/>
</dbReference>
<dbReference type="EMBL" id="AF000422">
    <property type="protein sequence ID" value="AAB60864.1"/>
    <property type="status" value="ALT_SEQ"/>
    <property type="molecule type" value="mRNA"/>
</dbReference>
<dbReference type="EMBL" id="BC008965">
    <property type="protein sequence ID" value="AAH08965.2"/>
    <property type="molecule type" value="mRNA"/>
</dbReference>
<dbReference type="CCDS" id="CCDS44924.1">
    <molecule id="Q9UIF9-1"/>
</dbReference>
<dbReference type="RefSeq" id="NP_038477.2">
    <molecule id="Q9UIF9-1"/>
    <property type="nucleotide sequence ID" value="NM_013449.4"/>
</dbReference>
<dbReference type="PDB" id="4LZ2">
    <property type="method" value="X-ray"/>
    <property type="resolution" value="1.76 A"/>
    <property type="chains" value="A=1796-1899"/>
</dbReference>
<dbReference type="PDB" id="4Q6F">
    <property type="method" value="X-ray"/>
    <property type="resolution" value="1.91 A"/>
    <property type="chains" value="A/B/C/D=1673-1728"/>
</dbReference>
<dbReference type="PDB" id="4QBM">
    <property type="method" value="X-ray"/>
    <property type="resolution" value="1.65 A"/>
    <property type="chains" value="A/B=1796-1899"/>
</dbReference>
<dbReference type="PDB" id="4QF2">
    <property type="method" value="X-ray"/>
    <property type="resolution" value="1.70 A"/>
    <property type="chains" value="A/B/C/D=1673-1728"/>
</dbReference>
<dbReference type="PDB" id="5AGQ">
    <property type="method" value="NMR"/>
    <property type="chains" value="A=543-650"/>
</dbReference>
<dbReference type="PDB" id="5MGJ">
    <property type="method" value="X-ray"/>
    <property type="resolution" value="2.10 A"/>
    <property type="chains" value="A=1796-1898"/>
</dbReference>
<dbReference type="PDB" id="5MGK">
    <property type="method" value="X-ray"/>
    <property type="resolution" value="2.30 A"/>
    <property type="chains" value="A=1796-1898"/>
</dbReference>
<dbReference type="PDB" id="5MGL">
    <property type="method" value="X-ray"/>
    <property type="resolution" value="2.65 A"/>
    <property type="chains" value="A=1796-1898"/>
</dbReference>
<dbReference type="PDB" id="5MGM">
    <property type="method" value="X-ray"/>
    <property type="resolution" value="2.80 A"/>
    <property type="chains" value="A=1796-1898"/>
</dbReference>
<dbReference type="PDB" id="5OR8">
    <property type="method" value="X-ray"/>
    <property type="resolution" value="2.40 A"/>
    <property type="chains" value="A=1796-1899"/>
</dbReference>
<dbReference type="PDB" id="5T8R">
    <property type="method" value="X-ray"/>
    <property type="resolution" value="2.40 A"/>
    <property type="chains" value="A/B/C/D=1673-1728"/>
</dbReference>
<dbReference type="PDB" id="6FAP">
    <property type="method" value="X-ray"/>
    <property type="resolution" value="2.70 A"/>
    <property type="chains" value="A/B/C/D=1673-1728"/>
</dbReference>
<dbReference type="PDB" id="6FG6">
    <property type="method" value="X-ray"/>
    <property type="resolution" value="2.40 A"/>
    <property type="chains" value="A=1796-1898"/>
</dbReference>
<dbReference type="PDB" id="6FGF">
    <property type="method" value="X-ray"/>
    <property type="resolution" value="2.80 A"/>
    <property type="chains" value="A=1796-1898"/>
</dbReference>
<dbReference type="PDB" id="6FGG">
    <property type="method" value="X-ray"/>
    <property type="resolution" value="1.10 A"/>
    <property type="chains" value="A=1796-1899"/>
</dbReference>
<dbReference type="PDB" id="6FGH">
    <property type="method" value="X-ray"/>
    <property type="resolution" value="2.10 A"/>
    <property type="chains" value="A=1796-1898"/>
</dbReference>
<dbReference type="PDB" id="6FGI">
    <property type="method" value="X-ray"/>
    <property type="resolution" value="2.55 A"/>
    <property type="chains" value="A=1796-1898"/>
</dbReference>
<dbReference type="PDB" id="6FGL">
    <property type="method" value="X-ray"/>
    <property type="resolution" value="2.10 A"/>
    <property type="chains" value="A=1796-1898"/>
</dbReference>
<dbReference type="PDB" id="6FGV">
    <property type="method" value="X-ray"/>
    <property type="resolution" value="2.50 A"/>
    <property type="chains" value="A=1796-1899"/>
</dbReference>
<dbReference type="PDB" id="6FGW">
    <property type="method" value="X-ray"/>
    <property type="resolution" value="2.73 A"/>
    <property type="chains" value="A=1796-1899"/>
</dbReference>
<dbReference type="PDB" id="6FHU">
    <property type="method" value="X-ray"/>
    <property type="resolution" value="2.00 A"/>
    <property type="chains" value="A/B/C/D=1673-1728"/>
</dbReference>
<dbReference type="PDB" id="6FI0">
    <property type="method" value="X-ray"/>
    <property type="resolution" value="1.90 A"/>
    <property type="chains" value="A/B/C/D=1673-1728"/>
</dbReference>
<dbReference type="PDB" id="6FKP">
    <property type="method" value="X-ray"/>
    <property type="resolution" value="2.00 A"/>
    <property type="chains" value="A/B/C/D=1673-1728"/>
</dbReference>
<dbReference type="PDB" id="7B7B">
    <property type="method" value="X-ray"/>
    <property type="resolution" value="1.40 A"/>
    <property type="chains" value="A=1796-1898"/>
</dbReference>
<dbReference type="PDB" id="7B7G">
    <property type="method" value="X-ray"/>
    <property type="resolution" value="1.43 A"/>
    <property type="chains" value="A=1796-1898"/>
</dbReference>
<dbReference type="PDB" id="7B7I">
    <property type="method" value="X-ray"/>
    <property type="resolution" value="1.15 A"/>
    <property type="chains" value="A=1796-1898"/>
</dbReference>
<dbReference type="PDB" id="7B82">
    <property type="method" value="X-ray"/>
    <property type="resolution" value="1.25 A"/>
    <property type="chains" value="A=1796-1898"/>
</dbReference>
<dbReference type="PDB" id="7BC2">
    <property type="method" value="X-ray"/>
    <property type="resolution" value="2.00 A"/>
    <property type="chains" value="A=1796-1898"/>
</dbReference>
<dbReference type="PDB" id="7BL8">
    <property type="method" value="X-ray"/>
    <property type="resolution" value="2.50 A"/>
    <property type="chains" value="A=1796-1898"/>
</dbReference>
<dbReference type="PDB" id="7BL9">
    <property type="method" value="X-ray"/>
    <property type="resolution" value="1.30 A"/>
    <property type="chains" value="A=1796-1898"/>
</dbReference>
<dbReference type="PDB" id="7BLA">
    <property type="method" value="X-ray"/>
    <property type="resolution" value="1.09 A"/>
    <property type="chains" value="A=1796-1898"/>
</dbReference>
<dbReference type="PDB" id="7BLB">
    <property type="method" value="X-ray"/>
    <property type="resolution" value="2.30 A"/>
    <property type="chains" value="A=1796-1898"/>
</dbReference>
<dbReference type="PDB" id="7BLC">
    <property type="method" value="X-ray"/>
    <property type="resolution" value="2.30 A"/>
    <property type="chains" value="A=1796-1898"/>
</dbReference>
<dbReference type="PDB" id="7BLD">
    <property type="method" value="X-ray"/>
    <property type="resolution" value="2.35 A"/>
    <property type="chains" value="A=1796-1898"/>
</dbReference>
<dbReference type="PDB" id="7FHJ">
    <property type="method" value="X-ray"/>
    <property type="resolution" value="2.28 A"/>
    <property type="chains" value="A/B=536-653"/>
</dbReference>
<dbReference type="PDB" id="7MWH">
    <property type="method" value="X-ray"/>
    <property type="resolution" value="2.28 A"/>
    <property type="chains" value="A/B=536-653"/>
</dbReference>
<dbReference type="PDB" id="7MWI">
    <property type="method" value="X-ray"/>
    <property type="resolution" value="1.80 A"/>
    <property type="chains" value="A=536-653"/>
</dbReference>
<dbReference type="PDB" id="7MWL">
    <property type="method" value="X-ray"/>
    <property type="resolution" value="1.84 A"/>
    <property type="chains" value="A/B=536-653"/>
</dbReference>
<dbReference type="PDB" id="7QVT">
    <property type="method" value="X-ray"/>
    <property type="resolution" value="2.60 A"/>
    <property type="chains" value="A=1796-1898"/>
</dbReference>
<dbReference type="PDB" id="7QVU">
    <property type="method" value="X-ray"/>
    <property type="resolution" value="2.40 A"/>
    <property type="chains" value="A=1796-1898"/>
</dbReference>
<dbReference type="PDB" id="7QVV">
    <property type="method" value="X-ray"/>
    <property type="resolution" value="2.60 A"/>
    <property type="chains" value="A=1796-1898"/>
</dbReference>
<dbReference type="PDB" id="7QWF">
    <property type="method" value="X-ray"/>
    <property type="resolution" value="2.25 A"/>
    <property type="chains" value="A=1796-1898"/>
</dbReference>
<dbReference type="PDB" id="7QWU">
    <property type="method" value="X-ray"/>
    <property type="resolution" value="1.60 A"/>
    <property type="chains" value="A=1796-1898"/>
</dbReference>
<dbReference type="PDB" id="7QWY">
    <property type="method" value="X-ray"/>
    <property type="resolution" value="2.44 A"/>
    <property type="chains" value="A=1796-1898"/>
</dbReference>
<dbReference type="PDB" id="7QX2">
    <property type="method" value="X-ray"/>
    <property type="resolution" value="1.43 A"/>
    <property type="chains" value="A=1796-1898"/>
</dbReference>
<dbReference type="PDB" id="7QX9">
    <property type="method" value="X-ray"/>
    <property type="resolution" value="1.50 A"/>
    <property type="chains" value="A=1796-1898"/>
</dbReference>
<dbReference type="PDB" id="7QXL">
    <property type="method" value="X-ray"/>
    <property type="resolution" value="1.15 A"/>
    <property type="chains" value="A=1796-1898"/>
</dbReference>
<dbReference type="PDB" id="7QYE">
    <property type="method" value="X-ray"/>
    <property type="resolution" value="1.65 A"/>
    <property type="chains" value="A=1796-1898"/>
</dbReference>
<dbReference type="PDB" id="7QYO">
    <property type="method" value="X-ray"/>
    <property type="resolution" value="0.98 A"/>
    <property type="chains" value="A=1796-1899"/>
</dbReference>
<dbReference type="PDB" id="7QYT">
    <property type="method" value="X-ray"/>
    <property type="resolution" value="2.60 A"/>
    <property type="chains" value="A=1796-1898"/>
</dbReference>
<dbReference type="PDB" id="7QYU">
    <property type="method" value="X-ray"/>
    <property type="resolution" value="1.50 A"/>
    <property type="chains" value="A=1796-1898"/>
</dbReference>
<dbReference type="PDB" id="7QYV">
    <property type="method" value="X-ray"/>
    <property type="resolution" value="2.25 A"/>
    <property type="chains" value="A=1796-1898"/>
</dbReference>
<dbReference type="PDB" id="7QYW">
    <property type="method" value="X-ray"/>
    <property type="resolution" value="2.10 A"/>
    <property type="chains" value="A=1796-1898"/>
</dbReference>
<dbReference type="PDB" id="7QZ0">
    <property type="method" value="X-ray"/>
    <property type="resolution" value="2.10 A"/>
    <property type="chains" value="A=1796-1898"/>
</dbReference>
<dbReference type="PDB" id="7QZ4">
    <property type="method" value="X-ray"/>
    <property type="resolution" value="2.30 A"/>
    <property type="chains" value="A=1796-1898"/>
</dbReference>
<dbReference type="PDB" id="7QZB">
    <property type="method" value="X-ray"/>
    <property type="resolution" value="2.15 A"/>
    <property type="chains" value="A=1796-1898"/>
</dbReference>
<dbReference type="PDB" id="7QZC">
    <property type="method" value="X-ray"/>
    <property type="resolution" value="2.10 A"/>
    <property type="chains" value="A=1796-1898"/>
</dbReference>
<dbReference type="PDB" id="7QZI">
    <property type="method" value="X-ray"/>
    <property type="resolution" value="1.98 A"/>
    <property type="chains" value="A=1796-1898"/>
</dbReference>
<dbReference type="PDB" id="7QZT">
    <property type="method" value="X-ray"/>
    <property type="resolution" value="2.18 A"/>
    <property type="chains" value="A=1796-1898"/>
</dbReference>
<dbReference type="PDB" id="7R01">
    <property type="method" value="X-ray"/>
    <property type="resolution" value="2.26 A"/>
    <property type="chains" value="A=1796-1898"/>
</dbReference>
<dbReference type="PDB" id="7R0B">
    <property type="method" value="X-ray"/>
    <property type="resolution" value="2.35 A"/>
    <property type="chains" value="A=1796-1898"/>
</dbReference>
<dbReference type="PDBsum" id="4LZ2"/>
<dbReference type="PDBsum" id="4Q6F"/>
<dbReference type="PDBsum" id="4QBM"/>
<dbReference type="PDBsum" id="4QF2"/>
<dbReference type="PDBsum" id="5AGQ"/>
<dbReference type="PDBsum" id="5MGJ"/>
<dbReference type="PDBsum" id="5MGK"/>
<dbReference type="PDBsum" id="5MGL"/>
<dbReference type="PDBsum" id="5MGM"/>
<dbReference type="PDBsum" id="5OR8"/>
<dbReference type="PDBsum" id="5T8R"/>
<dbReference type="PDBsum" id="6FAP"/>
<dbReference type="PDBsum" id="6FG6"/>
<dbReference type="PDBsum" id="6FGF"/>
<dbReference type="PDBsum" id="6FGG"/>
<dbReference type="PDBsum" id="6FGH"/>
<dbReference type="PDBsum" id="6FGI"/>
<dbReference type="PDBsum" id="6FGL"/>
<dbReference type="PDBsum" id="6FGV"/>
<dbReference type="PDBsum" id="6FGW"/>
<dbReference type="PDBsum" id="6FHU"/>
<dbReference type="PDBsum" id="6FI0"/>
<dbReference type="PDBsum" id="6FKP"/>
<dbReference type="PDBsum" id="7B7B"/>
<dbReference type="PDBsum" id="7B7G"/>
<dbReference type="PDBsum" id="7B7I"/>
<dbReference type="PDBsum" id="7B82"/>
<dbReference type="PDBsum" id="7BC2"/>
<dbReference type="PDBsum" id="7BL8"/>
<dbReference type="PDBsum" id="7BL9"/>
<dbReference type="PDBsum" id="7BLA"/>
<dbReference type="PDBsum" id="7BLB"/>
<dbReference type="PDBsum" id="7BLC"/>
<dbReference type="PDBsum" id="7BLD"/>
<dbReference type="PDBsum" id="7FHJ"/>
<dbReference type="PDBsum" id="7MWH"/>
<dbReference type="PDBsum" id="7MWI"/>
<dbReference type="PDBsum" id="7MWL"/>
<dbReference type="PDBsum" id="7QVT"/>
<dbReference type="PDBsum" id="7QVU"/>
<dbReference type="PDBsum" id="7QVV"/>
<dbReference type="PDBsum" id="7QWF"/>
<dbReference type="PDBsum" id="7QWU"/>
<dbReference type="PDBsum" id="7QWY"/>
<dbReference type="PDBsum" id="7QX2"/>
<dbReference type="PDBsum" id="7QX9"/>
<dbReference type="PDBsum" id="7QXL"/>
<dbReference type="PDBsum" id="7QYE"/>
<dbReference type="PDBsum" id="7QYO"/>
<dbReference type="PDBsum" id="7QYT"/>
<dbReference type="PDBsum" id="7QYU"/>
<dbReference type="PDBsum" id="7QYV"/>
<dbReference type="PDBsum" id="7QYW"/>
<dbReference type="PDBsum" id="7QZ0"/>
<dbReference type="PDBsum" id="7QZ4"/>
<dbReference type="PDBsum" id="7QZB"/>
<dbReference type="PDBsum" id="7QZC"/>
<dbReference type="PDBsum" id="7QZI"/>
<dbReference type="PDBsum" id="7QZT"/>
<dbReference type="PDBsum" id="7R01"/>
<dbReference type="PDBsum" id="7R0B"/>
<dbReference type="BMRB" id="Q9UIF9"/>
<dbReference type="SMR" id="Q9UIF9"/>
<dbReference type="BioGRID" id="116346">
    <property type="interactions" value="77"/>
</dbReference>
<dbReference type="ComplexPortal" id="CPX-432">
    <property type="entry name" value="NoRC chromatin remodelling complex"/>
</dbReference>
<dbReference type="CORUM" id="Q9UIF9"/>
<dbReference type="FunCoup" id="Q9UIF9">
    <property type="interactions" value="2356"/>
</dbReference>
<dbReference type="IntAct" id="Q9UIF9">
    <property type="interactions" value="36"/>
</dbReference>
<dbReference type="MINT" id="Q9UIF9"/>
<dbReference type="STRING" id="9606.ENSP00000446880"/>
<dbReference type="BindingDB" id="Q9UIF9"/>
<dbReference type="ChEMBL" id="CHEMBL3108642"/>
<dbReference type="GuidetoPHARMACOLOGY" id="2721"/>
<dbReference type="GlyCosmos" id="Q9UIF9">
    <property type="glycosylation" value="1 site, 1 glycan"/>
</dbReference>
<dbReference type="GlyGen" id="Q9UIF9">
    <property type="glycosylation" value="8 sites, 1 N-linked glycan (1 site), 1 O-linked glycan (3 sites)"/>
</dbReference>
<dbReference type="iPTMnet" id="Q9UIF9"/>
<dbReference type="PhosphoSitePlus" id="Q9UIF9"/>
<dbReference type="SwissPalm" id="Q9UIF9"/>
<dbReference type="BioMuta" id="BAZ2A"/>
<dbReference type="DMDM" id="257051081"/>
<dbReference type="jPOST" id="Q9UIF9"/>
<dbReference type="MassIVE" id="Q9UIF9"/>
<dbReference type="PaxDb" id="9606-ENSP00000446880"/>
<dbReference type="PeptideAtlas" id="Q9UIF9"/>
<dbReference type="ProteomicsDB" id="84511">
    <molecule id="Q9UIF9-1"/>
</dbReference>
<dbReference type="ProteomicsDB" id="84512">
    <molecule id="Q9UIF9-2"/>
</dbReference>
<dbReference type="ProteomicsDB" id="84513">
    <molecule id="Q9UIF9-3"/>
</dbReference>
<dbReference type="Pumba" id="Q9UIF9"/>
<dbReference type="Antibodypedia" id="28282">
    <property type="antibodies" value="99 antibodies from 22 providers"/>
</dbReference>
<dbReference type="DNASU" id="11176"/>
<dbReference type="Ensembl" id="ENST00000551812.5">
    <molecule id="Q9UIF9-1"/>
    <property type="protein sequence ID" value="ENSP00000446880.1"/>
    <property type="gene ID" value="ENSG00000076108.12"/>
</dbReference>
<dbReference type="GeneID" id="11176"/>
<dbReference type="KEGG" id="hsa:11176"/>
<dbReference type="UCSC" id="uc001slq.2">
    <molecule id="Q9UIF9-1"/>
    <property type="organism name" value="human"/>
</dbReference>
<dbReference type="AGR" id="HGNC:962"/>
<dbReference type="CTD" id="11176"/>
<dbReference type="DisGeNET" id="11176"/>
<dbReference type="GeneCards" id="BAZ2A"/>
<dbReference type="HGNC" id="HGNC:962">
    <property type="gene designation" value="BAZ2A"/>
</dbReference>
<dbReference type="HPA" id="ENSG00000076108">
    <property type="expression patterns" value="Low tissue specificity"/>
</dbReference>
<dbReference type="MIM" id="605682">
    <property type="type" value="gene"/>
</dbReference>
<dbReference type="neXtProt" id="NX_Q9UIF9"/>
<dbReference type="OpenTargets" id="ENSG00000076108"/>
<dbReference type="PharmGKB" id="PA25272"/>
<dbReference type="VEuPathDB" id="HostDB:ENSG00000076108"/>
<dbReference type="eggNOG" id="KOG1245">
    <property type="taxonomic scope" value="Eukaryota"/>
</dbReference>
<dbReference type="GeneTree" id="ENSGT00940000159490"/>
<dbReference type="InParanoid" id="Q9UIF9"/>
<dbReference type="OrthoDB" id="21449at2759"/>
<dbReference type="PAN-GO" id="Q9UIF9">
    <property type="GO annotations" value="1 GO annotation based on evolutionary models"/>
</dbReference>
<dbReference type="PhylomeDB" id="Q9UIF9"/>
<dbReference type="TreeFam" id="TF329083"/>
<dbReference type="PathwayCommons" id="Q9UIF9"/>
<dbReference type="Reactome" id="R-HSA-427413">
    <property type="pathway name" value="NoRC negatively regulates rRNA expression"/>
</dbReference>
<dbReference type="SignaLink" id="Q9UIF9"/>
<dbReference type="BioGRID-ORCS" id="11176">
    <property type="hits" value="41 hits in 1171 CRISPR screens"/>
</dbReference>
<dbReference type="ChiTaRS" id="BAZ2A">
    <property type="organism name" value="human"/>
</dbReference>
<dbReference type="EvolutionaryTrace" id="Q9UIF9"/>
<dbReference type="GeneWiki" id="BAZ2A"/>
<dbReference type="GenomeRNAi" id="11176"/>
<dbReference type="Pharos" id="Q9UIF9">
    <property type="development level" value="Tchem"/>
</dbReference>
<dbReference type="PRO" id="PR:Q9UIF9"/>
<dbReference type="Proteomes" id="UP000005640">
    <property type="component" value="Chromosome 12"/>
</dbReference>
<dbReference type="RNAct" id="Q9UIF9">
    <property type="molecule type" value="protein"/>
</dbReference>
<dbReference type="Bgee" id="ENSG00000076108">
    <property type="expression patterns" value="Expressed in sural nerve and 210 other cell types or tissues"/>
</dbReference>
<dbReference type="ExpressionAtlas" id="Q9UIF9">
    <property type="expression patterns" value="baseline and differential"/>
</dbReference>
<dbReference type="GO" id="GO:0005677">
    <property type="term" value="C:chromatin silencing complex"/>
    <property type="evidence" value="ECO:0000250"/>
    <property type="project" value="UniProtKB"/>
</dbReference>
<dbReference type="GO" id="GO:0005829">
    <property type="term" value="C:cytosol"/>
    <property type="evidence" value="ECO:0000314"/>
    <property type="project" value="HPA"/>
</dbReference>
<dbReference type="GO" id="GO:0090536">
    <property type="term" value="C:NoRC complex"/>
    <property type="evidence" value="ECO:0000266"/>
    <property type="project" value="ComplexPortal"/>
</dbReference>
<dbReference type="GO" id="GO:0016607">
    <property type="term" value="C:nuclear speck"/>
    <property type="evidence" value="ECO:0000314"/>
    <property type="project" value="HPA"/>
</dbReference>
<dbReference type="GO" id="GO:0005730">
    <property type="term" value="C:nucleolus"/>
    <property type="evidence" value="ECO:0000250"/>
    <property type="project" value="UniProtKB"/>
</dbReference>
<dbReference type="GO" id="GO:0005634">
    <property type="term" value="C:nucleus"/>
    <property type="evidence" value="ECO:0000314"/>
    <property type="project" value="UniProtKB"/>
</dbReference>
<dbReference type="GO" id="GO:0033553">
    <property type="term" value="C:rDNA heterochromatin"/>
    <property type="evidence" value="ECO:0000250"/>
    <property type="project" value="UniProtKB"/>
</dbReference>
<dbReference type="GO" id="GO:0003677">
    <property type="term" value="F:DNA binding"/>
    <property type="evidence" value="ECO:0007669"/>
    <property type="project" value="UniProtKB-KW"/>
</dbReference>
<dbReference type="GO" id="GO:0042393">
    <property type="term" value="F:histone binding"/>
    <property type="evidence" value="ECO:0000353"/>
    <property type="project" value="UniProtKB"/>
</dbReference>
<dbReference type="GO" id="GO:0140046">
    <property type="term" value="F:histone H4K16ac reader activity"/>
    <property type="evidence" value="ECO:0000250"/>
    <property type="project" value="UniProtKB"/>
</dbReference>
<dbReference type="GO" id="GO:0016922">
    <property type="term" value="F:nuclear receptor binding"/>
    <property type="evidence" value="ECO:0000303"/>
    <property type="project" value="BHF-UCL"/>
</dbReference>
<dbReference type="GO" id="GO:0003723">
    <property type="term" value="F:RNA binding"/>
    <property type="evidence" value="ECO:0000250"/>
    <property type="project" value="UniProtKB"/>
</dbReference>
<dbReference type="GO" id="GO:0008270">
    <property type="term" value="F:zinc ion binding"/>
    <property type="evidence" value="ECO:0007669"/>
    <property type="project" value="UniProtKB-KW"/>
</dbReference>
<dbReference type="GO" id="GO:0006338">
    <property type="term" value="P:chromatin remodeling"/>
    <property type="evidence" value="ECO:0000303"/>
    <property type="project" value="UniProtKB"/>
</dbReference>
<dbReference type="GO" id="GO:0006346">
    <property type="term" value="P:DNA methylation-dependent constitutive heterochromatin formation"/>
    <property type="evidence" value="ECO:0000266"/>
    <property type="project" value="ComplexPortal"/>
</dbReference>
<dbReference type="GO" id="GO:0006351">
    <property type="term" value="P:DNA-templated transcription"/>
    <property type="evidence" value="ECO:0000303"/>
    <property type="project" value="UniProtKB"/>
</dbReference>
<dbReference type="GO" id="GO:0031507">
    <property type="term" value="P:heterochromatin formation"/>
    <property type="evidence" value="ECO:0000266"/>
    <property type="project" value="ComplexPortal"/>
</dbReference>
<dbReference type="GO" id="GO:0016479">
    <property type="term" value="P:negative regulation of transcription by RNA polymerase I"/>
    <property type="evidence" value="ECO:0000266"/>
    <property type="project" value="ComplexPortal"/>
</dbReference>
<dbReference type="GO" id="GO:0000183">
    <property type="term" value="P:rDNA heterochromatin formation"/>
    <property type="evidence" value="ECO:0000250"/>
    <property type="project" value="UniProtKB"/>
</dbReference>
<dbReference type="GO" id="GO:0006355">
    <property type="term" value="P:regulation of DNA-templated transcription"/>
    <property type="evidence" value="ECO:0000303"/>
    <property type="project" value="UniProtKB"/>
</dbReference>
<dbReference type="GO" id="GO:0001188">
    <property type="term" value="P:RNA polymerase I preinitiation complex assembly"/>
    <property type="evidence" value="ECO:0007669"/>
    <property type="project" value="GOC"/>
</dbReference>
<dbReference type="CDD" id="cd05503">
    <property type="entry name" value="Bromo_BAZ2A_B_like"/>
    <property type="match status" value="1"/>
</dbReference>
<dbReference type="CDD" id="cd01397">
    <property type="entry name" value="HAT_MBD"/>
    <property type="match status" value="1"/>
</dbReference>
<dbReference type="CDD" id="cd15629">
    <property type="entry name" value="PHD_BAZ2A"/>
    <property type="match status" value="1"/>
</dbReference>
<dbReference type="DisProt" id="DP03044"/>
<dbReference type="FunFam" id="3.30.40.10:FF:000255">
    <property type="entry name" value="Bromodomain adjacent to zinc finger domain protein 2A"/>
    <property type="match status" value="1"/>
</dbReference>
<dbReference type="FunFam" id="1.20.920.10:FF:000023">
    <property type="entry name" value="Bromodomain adjacent to zinc finger domain protein 2B"/>
    <property type="match status" value="1"/>
</dbReference>
<dbReference type="FunFam" id="3.30.890.10:FF:000002">
    <property type="entry name" value="Bromodomain adjacent to zinc finger domain protein 2B"/>
    <property type="match status" value="1"/>
</dbReference>
<dbReference type="Gene3D" id="1.20.920.10">
    <property type="entry name" value="Bromodomain-like"/>
    <property type="match status" value="1"/>
</dbReference>
<dbReference type="Gene3D" id="3.30.890.10">
    <property type="entry name" value="Methyl-cpg-binding Protein 2, Chain A"/>
    <property type="match status" value="1"/>
</dbReference>
<dbReference type="Gene3D" id="3.30.40.10">
    <property type="entry name" value="Zinc/RING finger domain, C3HC4 (zinc finger)"/>
    <property type="match status" value="1"/>
</dbReference>
<dbReference type="InterPro" id="IPR017956">
    <property type="entry name" value="AT_hook_DNA-bd_motif"/>
</dbReference>
<dbReference type="InterPro" id="IPR037374">
    <property type="entry name" value="BAZ2A/B_Bromo"/>
</dbReference>
<dbReference type="InterPro" id="IPR001487">
    <property type="entry name" value="Bromodomain"/>
</dbReference>
<dbReference type="InterPro" id="IPR036427">
    <property type="entry name" value="Bromodomain-like_sf"/>
</dbReference>
<dbReference type="InterPro" id="IPR018359">
    <property type="entry name" value="Bromodomain_CS"/>
</dbReference>
<dbReference type="InterPro" id="IPR018501">
    <property type="entry name" value="DDT_dom"/>
</dbReference>
<dbReference type="InterPro" id="IPR016177">
    <property type="entry name" value="DNA-bd_dom_sf"/>
</dbReference>
<dbReference type="InterPro" id="IPR001739">
    <property type="entry name" value="Methyl_CpG_DNA-bd"/>
</dbReference>
<dbReference type="InterPro" id="IPR028940">
    <property type="entry name" value="PHD_BAZ2A"/>
</dbReference>
<dbReference type="InterPro" id="IPR028942">
    <property type="entry name" value="WHIM1_dom"/>
</dbReference>
<dbReference type="InterPro" id="IPR028941">
    <property type="entry name" value="WHIM2_dom"/>
</dbReference>
<dbReference type="InterPro" id="IPR011011">
    <property type="entry name" value="Znf_FYVE_PHD"/>
</dbReference>
<dbReference type="InterPro" id="IPR001965">
    <property type="entry name" value="Znf_PHD"/>
</dbReference>
<dbReference type="InterPro" id="IPR019787">
    <property type="entry name" value="Znf_PHD-finger"/>
</dbReference>
<dbReference type="InterPro" id="IPR013083">
    <property type="entry name" value="Znf_RING/FYVE/PHD"/>
</dbReference>
<dbReference type="PANTHER" id="PTHR45915:SF5">
    <property type="entry name" value="BROMODOMAIN ADJACENT TO ZINC FINGER DOMAIN PROTEIN 2A"/>
    <property type="match status" value="1"/>
</dbReference>
<dbReference type="PANTHER" id="PTHR45915">
    <property type="entry name" value="TRANSCRIPTION INTERMEDIARY FACTOR"/>
    <property type="match status" value="1"/>
</dbReference>
<dbReference type="Pfam" id="PF00439">
    <property type="entry name" value="Bromodomain"/>
    <property type="match status" value="1"/>
</dbReference>
<dbReference type="Pfam" id="PF02791">
    <property type="entry name" value="DDT"/>
    <property type="match status" value="1"/>
</dbReference>
<dbReference type="Pfam" id="PF01429">
    <property type="entry name" value="MBD"/>
    <property type="match status" value="1"/>
</dbReference>
<dbReference type="Pfam" id="PF00628">
    <property type="entry name" value="PHD"/>
    <property type="match status" value="1"/>
</dbReference>
<dbReference type="Pfam" id="PF15612">
    <property type="entry name" value="WHIM1"/>
    <property type="match status" value="1"/>
</dbReference>
<dbReference type="Pfam" id="PF15613">
    <property type="entry name" value="WSD"/>
    <property type="match status" value="1"/>
</dbReference>
<dbReference type="PRINTS" id="PR00503">
    <property type="entry name" value="BROMODOMAIN"/>
</dbReference>
<dbReference type="SMART" id="SM00384">
    <property type="entry name" value="AT_hook"/>
    <property type="match status" value="4"/>
</dbReference>
<dbReference type="SMART" id="SM00297">
    <property type="entry name" value="BROMO"/>
    <property type="match status" value="1"/>
</dbReference>
<dbReference type="SMART" id="SM00571">
    <property type="entry name" value="DDT"/>
    <property type="match status" value="1"/>
</dbReference>
<dbReference type="SMART" id="SM00391">
    <property type="entry name" value="MBD"/>
    <property type="match status" value="1"/>
</dbReference>
<dbReference type="SMART" id="SM00249">
    <property type="entry name" value="PHD"/>
    <property type="match status" value="1"/>
</dbReference>
<dbReference type="SUPFAM" id="SSF47370">
    <property type="entry name" value="Bromodomain"/>
    <property type="match status" value="1"/>
</dbReference>
<dbReference type="SUPFAM" id="SSF54171">
    <property type="entry name" value="DNA-binding domain"/>
    <property type="match status" value="1"/>
</dbReference>
<dbReference type="SUPFAM" id="SSF57903">
    <property type="entry name" value="FYVE/PHD zinc finger"/>
    <property type="match status" value="1"/>
</dbReference>
<dbReference type="PROSITE" id="PS00633">
    <property type="entry name" value="BROMODOMAIN_1"/>
    <property type="match status" value="1"/>
</dbReference>
<dbReference type="PROSITE" id="PS50014">
    <property type="entry name" value="BROMODOMAIN_2"/>
    <property type="match status" value="1"/>
</dbReference>
<dbReference type="PROSITE" id="PS50827">
    <property type="entry name" value="DDT"/>
    <property type="match status" value="1"/>
</dbReference>
<dbReference type="PROSITE" id="PS50982">
    <property type="entry name" value="MBD"/>
    <property type="match status" value="1"/>
</dbReference>
<dbReference type="PROSITE" id="PS50016">
    <property type="entry name" value="ZF_PHD_2"/>
    <property type="match status" value="1"/>
</dbReference>
<protein>
    <recommendedName>
        <fullName>Bromodomain adjacent to zinc finger domain protein 2A</fullName>
    </recommendedName>
    <alternativeName>
        <fullName>Transcription termination factor I-interacting protein 5</fullName>
        <shortName>TTF-I-interacting protein 5</shortName>
        <shortName>Tip5</shortName>
    </alternativeName>
    <alternativeName>
        <fullName>hWALp3</fullName>
    </alternativeName>
</protein>
<proteinExistence type="evidence at protein level"/>
<name>BAZ2A_HUMAN</name>
<sequence>MEMEANDHFNFTGLPPAPAASGLKPSPSSGEGLYTNGSPMNFPQQGKSLNGDVNVNGLSTVSHTTTSGILNSAPHSSSTSHLHHPSVAYDCLWNYSQYPSANPGSNLKDPPLLSQFSGGQYPLNGILGGSRQPSSPSHNTNLRAGSQEFWANGTQSPMGLNFDSQELYDSFPDQNFEVMPNGPPSFFTSPQTSPMLGSSIQTFAPSQEVGSGIHPDEAAEKEMTSVVAENGTGLVGSLELEEEQPELKMCGYNGSVPSVESLHQEVSVLVPDPTVSCLDDPSHLPDQLEDTPILSEDSLEPFNSLAPEPVSGGLYGIDDTELMGAEDKLPLEDSPVISALDCPSLNNATAFSLLADDSQTSTSIFASPTSPPVLGESVLQDNSFDLNNGSDAEQEEMETQSSDFPPSLTQPAPDQSSTIQLHPATSPAVSPTTSPAVSLVVSPAASPEISPEVCPAASTVVSPAVFSVVSPASSAVLPAVSLEVPLTASVTSPKASPVTSPAAAFPTASPANKDVSSFLETTADVEEITGEGLTASGSGDVMRRRIATPEEVRLPLQHGWRREVRIKKGSHRWQGETWYYGPCGKRMKQFPEVIKYLSRNVVHSVRREHFSFSPRMPVGDFFEERDTPEGLQWVQLSAEEIPSRIQAITGKRGRPRNTEKAKTKEVPKVKRGRGRPPKVKITELLNKTDNRPLKKLEAQETLNEEDKAKIAKSKKKMRQKVQRGECQTTIQGQARNKRKQETKSLKQKEAKKKSKAEKEKGKTKQEKLKEKVKREKKEKVKMKEKEEVTKAKPACKADKTLATQRRLEERQRQQMILEEMKKPTEDMCLTDHQPLPDFSRVPGLTLPSGAFSDCLTIVEFLHSFGKVLGFDPAKDVPSLGVLQEGLLCQGDSLGEVQDLLVRLLKAALHDPGFPSYCQSLKILGEKVSEIPLTRDNVSEILRCFLMAYGVEPALCDRLRTQPFQAQPPQQKAAVLAFLVHELNGSTLIINEIDKTLESMSSYRKNKWIVEGRLRRLKTVLAKRTGRSEVEMEGPEECLGRRRSSRIMEETSGMEEEEEEESIAAVPGRRGRRDGEVDATASSIPELERQIEKLSKRQLFFRKKLLHSSQMLRAVSLGQDRYRRRYWVLPYLAGIFVEGTEGNLVPEEVIKKETDSLKVAAHASLNPALFSMKMELAGSNTTASSPARARGRPRKTKPGSMQPRHLKSPVRGQDSEQPQAQLQPEAQLHAPAQPQPQLQLQLQSHKGFLEQEGSPLSLGQSQHDLSQSAFLSWLSQTQSHSSLLSSSVLTPDSSPGKLDPAPSQPPEEPEPDEAESSPDPQALWFNISAQMPCNAAPTPPPAVSEDQPTPSPQQLASSKPMNRPSAANPCSPVQFSSTPLAGLAPKRRAGDPGEMPQSPTGLGQPKRRGRPPSKFFKQMEQRYLTQLTAQPVPPEMCSGWWWIRDPEMLDAMLKALHPRGIREKALHKHLNKHRDFLQEVCLRPSADPIFEPRQLPAFQEGIMSWSPKEKTYETDLAVLQWVEELEQRVIMSDLQIRGWTCPSPDSTREDLAYCEHLSDSQEDITWRGRGREGLAPQRKTTNPLDLAVMRLAALEQNVERRYLREPLWPTHEVVLEKALLSTPNGAPEGTTTEISYEITPRIRVWRQTLERCRSAAQVCLCLGQLERSIAWEKSVNKVTCLVCRKGDNDEFLLLCDGCDRGCHIYCHRPKMEAVPEGDWFCTVCLAQQVEGEFTQKPGFPKRGQKRKSGYSLNFSEGDGRRRRVLLRGRESPAAGPRYSEEGLSPSKRRRLSMRNHHSDLTFCEIILMEMESHDAAWPFLEPVNPRLVSGYRRIIKNPMDFSTMRERLLRGGYTSSEEFAADALLVFDNCQTFNEDDSEVGKAGHIMRRFFESRWEEFYQGKQANL</sequence>
<organism>
    <name type="scientific">Homo sapiens</name>
    <name type="common">Human</name>
    <dbReference type="NCBI Taxonomy" id="9606"/>
    <lineage>
        <taxon>Eukaryota</taxon>
        <taxon>Metazoa</taxon>
        <taxon>Chordata</taxon>
        <taxon>Craniata</taxon>
        <taxon>Vertebrata</taxon>
        <taxon>Euteleostomi</taxon>
        <taxon>Mammalia</taxon>
        <taxon>Eutheria</taxon>
        <taxon>Euarchontoglires</taxon>
        <taxon>Primates</taxon>
        <taxon>Haplorrhini</taxon>
        <taxon>Catarrhini</taxon>
        <taxon>Hominidae</taxon>
        <taxon>Homo</taxon>
    </lineage>
</organism>
<gene>
    <name type="primary">BAZ2A</name>
    <name type="synonym">KIAA0314</name>
    <name type="synonym">TIP5</name>
</gene>